<protein>
    <recommendedName>
        <fullName evidence="1">tRNA-specific 2-thiouridylase MnmA</fullName>
        <ecNumber evidence="1">2.8.1.13</ecNumber>
    </recommendedName>
</protein>
<reference key="1">
    <citation type="journal article" date="2006" name="PLoS Genet.">
        <title>Comparative genomics of emerging human ehrlichiosis agents.</title>
        <authorList>
            <person name="Dunning Hotopp J.C."/>
            <person name="Lin M."/>
            <person name="Madupu R."/>
            <person name="Crabtree J."/>
            <person name="Angiuoli S.V."/>
            <person name="Eisen J.A."/>
            <person name="Seshadri R."/>
            <person name="Ren Q."/>
            <person name="Wu M."/>
            <person name="Utterback T.R."/>
            <person name="Smith S."/>
            <person name="Lewis M."/>
            <person name="Khouri H."/>
            <person name="Zhang C."/>
            <person name="Niu H."/>
            <person name="Lin Q."/>
            <person name="Ohashi N."/>
            <person name="Zhi N."/>
            <person name="Nelson W.C."/>
            <person name="Brinkac L.M."/>
            <person name="Dodson R.J."/>
            <person name="Rosovitz M.J."/>
            <person name="Sundaram J.P."/>
            <person name="Daugherty S.C."/>
            <person name="Davidsen T."/>
            <person name="Durkin A.S."/>
            <person name="Gwinn M.L."/>
            <person name="Haft D.H."/>
            <person name="Selengut J.D."/>
            <person name="Sullivan S.A."/>
            <person name="Zafar N."/>
            <person name="Zhou L."/>
            <person name="Benahmed F."/>
            <person name="Forberger H."/>
            <person name="Halpin R."/>
            <person name="Mulligan S."/>
            <person name="Robinson J."/>
            <person name="White O."/>
            <person name="Rikihisa Y."/>
            <person name="Tettelin H."/>
        </authorList>
    </citation>
    <scope>NUCLEOTIDE SEQUENCE [LARGE SCALE GENOMIC DNA]</scope>
    <source>
        <strain>HZ</strain>
    </source>
</reference>
<feature type="chain" id="PRO_0000349513" description="tRNA-specific 2-thiouridylase MnmA">
    <location>
        <begin position="1"/>
        <end position="378"/>
    </location>
</feature>
<feature type="region of interest" description="Interaction with tRNA" evidence="1">
    <location>
        <begin position="163"/>
        <end position="165"/>
    </location>
</feature>
<feature type="active site" description="Nucleophile" evidence="1">
    <location>
        <position position="117"/>
    </location>
</feature>
<feature type="active site" description="Cysteine persulfide intermediate" evidence="1">
    <location>
        <position position="213"/>
    </location>
</feature>
<feature type="binding site" evidence="1">
    <location>
        <begin position="24"/>
        <end position="31"/>
    </location>
    <ligand>
        <name>ATP</name>
        <dbReference type="ChEBI" id="CHEBI:30616"/>
    </ligand>
</feature>
<feature type="binding site" evidence="1">
    <location>
        <position position="50"/>
    </location>
    <ligand>
        <name>ATP</name>
        <dbReference type="ChEBI" id="CHEBI:30616"/>
    </ligand>
</feature>
<feature type="binding site" evidence="1">
    <location>
        <position position="141"/>
    </location>
    <ligand>
        <name>ATP</name>
        <dbReference type="ChEBI" id="CHEBI:30616"/>
    </ligand>
</feature>
<feature type="site" description="Interaction with tRNA" evidence="1">
    <location>
        <position position="142"/>
    </location>
</feature>
<feature type="site" description="Interaction with tRNA" evidence="1">
    <location>
        <position position="352"/>
    </location>
</feature>
<feature type="disulfide bond" description="Alternate" evidence="1">
    <location>
        <begin position="117"/>
        <end position="213"/>
    </location>
</feature>
<accession>Q2GJG8</accession>
<comment type="function">
    <text evidence="1">Catalyzes the 2-thiolation of uridine at the wobble position (U34) of tRNA, leading to the formation of s(2)U34.</text>
</comment>
<comment type="catalytic activity">
    <reaction evidence="1">
        <text>S-sulfanyl-L-cysteinyl-[protein] + uridine(34) in tRNA + AH2 + ATP = 2-thiouridine(34) in tRNA + L-cysteinyl-[protein] + A + AMP + diphosphate + H(+)</text>
        <dbReference type="Rhea" id="RHEA:47032"/>
        <dbReference type="Rhea" id="RHEA-COMP:10131"/>
        <dbReference type="Rhea" id="RHEA-COMP:11726"/>
        <dbReference type="Rhea" id="RHEA-COMP:11727"/>
        <dbReference type="Rhea" id="RHEA-COMP:11728"/>
        <dbReference type="ChEBI" id="CHEBI:13193"/>
        <dbReference type="ChEBI" id="CHEBI:15378"/>
        <dbReference type="ChEBI" id="CHEBI:17499"/>
        <dbReference type="ChEBI" id="CHEBI:29950"/>
        <dbReference type="ChEBI" id="CHEBI:30616"/>
        <dbReference type="ChEBI" id="CHEBI:33019"/>
        <dbReference type="ChEBI" id="CHEBI:61963"/>
        <dbReference type="ChEBI" id="CHEBI:65315"/>
        <dbReference type="ChEBI" id="CHEBI:87170"/>
        <dbReference type="ChEBI" id="CHEBI:456215"/>
        <dbReference type="EC" id="2.8.1.13"/>
    </reaction>
</comment>
<comment type="subcellular location">
    <subcellularLocation>
        <location evidence="1">Cytoplasm</location>
    </subcellularLocation>
</comment>
<comment type="similarity">
    <text evidence="1">Belongs to the MnmA/TRMU family.</text>
</comment>
<dbReference type="EC" id="2.8.1.13" evidence="1"/>
<dbReference type="EMBL" id="CP000235">
    <property type="protein sequence ID" value="ABD44416.1"/>
    <property type="molecule type" value="Genomic_DNA"/>
</dbReference>
<dbReference type="RefSeq" id="WP_011450997.1">
    <property type="nucleotide sequence ID" value="NC_007797.1"/>
</dbReference>
<dbReference type="SMR" id="Q2GJG8"/>
<dbReference type="STRING" id="212042.APH_0910"/>
<dbReference type="PaxDb" id="212042-APH_0910"/>
<dbReference type="EnsemblBacteria" id="ABD44416">
    <property type="protein sequence ID" value="ABD44416"/>
    <property type="gene ID" value="APH_0910"/>
</dbReference>
<dbReference type="KEGG" id="aph:APH_0910"/>
<dbReference type="PATRIC" id="fig|212042.8.peg.971"/>
<dbReference type="eggNOG" id="COG0482">
    <property type="taxonomic scope" value="Bacteria"/>
</dbReference>
<dbReference type="HOGENOM" id="CLU_035188_0_0_5"/>
<dbReference type="Proteomes" id="UP000001943">
    <property type="component" value="Chromosome"/>
</dbReference>
<dbReference type="GO" id="GO:0005737">
    <property type="term" value="C:cytoplasm"/>
    <property type="evidence" value="ECO:0007669"/>
    <property type="project" value="UniProtKB-SubCell"/>
</dbReference>
<dbReference type="GO" id="GO:0005524">
    <property type="term" value="F:ATP binding"/>
    <property type="evidence" value="ECO:0007669"/>
    <property type="project" value="UniProtKB-KW"/>
</dbReference>
<dbReference type="GO" id="GO:0000049">
    <property type="term" value="F:tRNA binding"/>
    <property type="evidence" value="ECO:0007669"/>
    <property type="project" value="UniProtKB-KW"/>
</dbReference>
<dbReference type="GO" id="GO:0103016">
    <property type="term" value="F:tRNA-uridine 2-sulfurtransferase activity"/>
    <property type="evidence" value="ECO:0007669"/>
    <property type="project" value="UniProtKB-EC"/>
</dbReference>
<dbReference type="GO" id="GO:0002143">
    <property type="term" value="P:tRNA wobble position uridine thiolation"/>
    <property type="evidence" value="ECO:0007669"/>
    <property type="project" value="TreeGrafter"/>
</dbReference>
<dbReference type="CDD" id="cd01998">
    <property type="entry name" value="MnmA_TRMU-like"/>
    <property type="match status" value="1"/>
</dbReference>
<dbReference type="FunFam" id="2.30.30.280:FF:000001">
    <property type="entry name" value="tRNA-specific 2-thiouridylase MnmA"/>
    <property type="match status" value="1"/>
</dbReference>
<dbReference type="FunFam" id="3.40.50.620:FF:000115">
    <property type="entry name" value="tRNA-specific 2-thiouridylase MnmA"/>
    <property type="match status" value="1"/>
</dbReference>
<dbReference type="Gene3D" id="2.30.30.280">
    <property type="entry name" value="Adenine nucleotide alpha hydrolases-like domains"/>
    <property type="match status" value="1"/>
</dbReference>
<dbReference type="Gene3D" id="3.40.50.620">
    <property type="entry name" value="HUPs"/>
    <property type="match status" value="1"/>
</dbReference>
<dbReference type="Gene3D" id="2.40.30.10">
    <property type="entry name" value="Translation factors"/>
    <property type="match status" value="1"/>
</dbReference>
<dbReference type="HAMAP" id="MF_00144">
    <property type="entry name" value="tRNA_thiouridyl_MnmA"/>
    <property type="match status" value="1"/>
</dbReference>
<dbReference type="InterPro" id="IPR004506">
    <property type="entry name" value="MnmA-like"/>
</dbReference>
<dbReference type="InterPro" id="IPR046885">
    <property type="entry name" value="MnmA-like_C"/>
</dbReference>
<dbReference type="InterPro" id="IPR046884">
    <property type="entry name" value="MnmA-like_central"/>
</dbReference>
<dbReference type="InterPro" id="IPR023382">
    <property type="entry name" value="MnmA-like_central_sf"/>
</dbReference>
<dbReference type="InterPro" id="IPR014729">
    <property type="entry name" value="Rossmann-like_a/b/a_fold"/>
</dbReference>
<dbReference type="NCBIfam" id="NF001138">
    <property type="entry name" value="PRK00143.1"/>
    <property type="match status" value="1"/>
</dbReference>
<dbReference type="NCBIfam" id="TIGR00420">
    <property type="entry name" value="trmU"/>
    <property type="match status" value="1"/>
</dbReference>
<dbReference type="PANTHER" id="PTHR11933:SF5">
    <property type="entry name" value="MITOCHONDRIAL TRNA-SPECIFIC 2-THIOURIDYLASE 1"/>
    <property type="match status" value="1"/>
</dbReference>
<dbReference type="PANTHER" id="PTHR11933">
    <property type="entry name" value="TRNA 5-METHYLAMINOMETHYL-2-THIOURIDYLATE -METHYLTRANSFERASE"/>
    <property type="match status" value="1"/>
</dbReference>
<dbReference type="Pfam" id="PF03054">
    <property type="entry name" value="tRNA_Me_trans"/>
    <property type="match status" value="1"/>
</dbReference>
<dbReference type="Pfam" id="PF20258">
    <property type="entry name" value="tRNA_Me_trans_C"/>
    <property type="match status" value="1"/>
</dbReference>
<dbReference type="Pfam" id="PF20259">
    <property type="entry name" value="tRNA_Me_trans_M"/>
    <property type="match status" value="1"/>
</dbReference>
<dbReference type="SUPFAM" id="SSF52402">
    <property type="entry name" value="Adenine nucleotide alpha hydrolases-like"/>
    <property type="match status" value="1"/>
</dbReference>
<proteinExistence type="inferred from homology"/>
<organism>
    <name type="scientific">Anaplasma phagocytophilum (strain HZ)</name>
    <dbReference type="NCBI Taxonomy" id="212042"/>
    <lineage>
        <taxon>Bacteria</taxon>
        <taxon>Pseudomonadati</taxon>
        <taxon>Pseudomonadota</taxon>
        <taxon>Alphaproteobacteria</taxon>
        <taxon>Rickettsiales</taxon>
        <taxon>Anaplasmataceae</taxon>
        <taxon>Anaplasma</taxon>
        <taxon>phagocytophilum group</taxon>
    </lineage>
</organism>
<name>MNMA_ANAPZ</name>
<keyword id="KW-0067">ATP-binding</keyword>
<keyword id="KW-0963">Cytoplasm</keyword>
<keyword id="KW-1015">Disulfide bond</keyword>
<keyword id="KW-0547">Nucleotide-binding</keyword>
<keyword id="KW-0694">RNA-binding</keyword>
<keyword id="KW-0808">Transferase</keyword>
<keyword id="KW-0819">tRNA processing</keyword>
<keyword id="KW-0820">tRNA-binding</keyword>
<gene>
    <name evidence="1" type="primary">mnmA</name>
    <name type="ordered locus">APH_0910</name>
</gene>
<evidence type="ECO:0000255" key="1">
    <source>
        <dbReference type="HAMAP-Rule" id="MF_00144"/>
    </source>
</evidence>
<sequence length="378" mass="41467">MINNLQLDSLVPGKRPEETTVVVAMSGGVDSSVVAVLLHKMGYKVIGATMQLYSSPNASSGKSCCGNADIYDAKKVAASFGFPHYVLNYEEVFRKEVIEDFVNSYKAGETPIPCIKCNQTVKFRDMLKMARTIGGDVVATGHYVRRLEVEGELQIWSGKDKNKDQSYFLFSMTLEQLKFVRFPLGNLVKGDVRKIAQYLNIEVADKPDSQDICFVPKNYKKTLASLDPSAIKKGKIHHIDGSVLGEHDGIANFTVGQRKGLGIAYPYPLYVVALDPVKNTVIVGPSSSLVKTQLFLRDLNWLSKDQIPEHGLSASVRLRSSSSAVQATISRSAKDGKGRVVLHEGCVVSPGQACVIYDNERLLGGGWILNQVRYSETA</sequence>